<reference key="1">
    <citation type="submission" date="2005-07" db="EMBL/GenBank/DDBJ databases">
        <title>Ribosomal proteins of Coleoptera.</title>
        <authorList>
            <person name="Longhorn S.J."/>
            <person name="Vogler A.P."/>
        </authorList>
    </citation>
    <scope>NUCLEOTIDE SEQUENCE [MRNA]</scope>
</reference>
<gene>
    <name type="primary">RpL38</name>
</gene>
<proteinExistence type="inferred from homology"/>
<keyword id="KW-0687">Ribonucleoprotein</keyword>
<keyword id="KW-0689">Ribosomal protein</keyword>
<protein>
    <recommendedName>
        <fullName evidence="1">Large ribosomal subunit protein eL38</fullName>
    </recommendedName>
    <alternativeName>
        <fullName>60S ribosomal protein L38</fullName>
    </alternativeName>
</protein>
<feature type="chain" id="PRO_0000319560" description="Large ribosomal subunit protein eL38">
    <location>
        <begin position="1"/>
        <end position="70"/>
    </location>
</feature>
<organism>
    <name type="scientific">Julodis onopordi</name>
    <name type="common">Jewel beetle</name>
    <name type="synonym">Buprestis onopordi</name>
    <dbReference type="NCBI Taxonomy" id="261158"/>
    <lineage>
        <taxon>Eukaryota</taxon>
        <taxon>Metazoa</taxon>
        <taxon>Ecdysozoa</taxon>
        <taxon>Arthropoda</taxon>
        <taxon>Hexapoda</taxon>
        <taxon>Insecta</taxon>
        <taxon>Pterygota</taxon>
        <taxon>Neoptera</taxon>
        <taxon>Endopterygota</taxon>
        <taxon>Coleoptera</taxon>
        <taxon>Polyphaga</taxon>
        <taxon>Elateriformia</taxon>
        <taxon>Buprestoidea</taxon>
        <taxon>Buprestidae</taxon>
        <taxon>Julodinae</taxon>
        <taxon>Julodis</taxon>
    </lineage>
</organism>
<accession>Q4GX87</accession>
<name>RL38_JULON</name>
<comment type="similarity">
    <text evidence="1">Belongs to the eukaryotic ribosomal protein eL38 family.</text>
</comment>
<sequence>MPREITEIKDFLLKARRKDAKSVKIKKNPDNVKFKVRCSRFLYTLVITDKEKAEKLKQSLPPGLQVKEVR</sequence>
<evidence type="ECO:0000305" key="1"/>
<dbReference type="EMBL" id="AM049136">
    <property type="protein sequence ID" value="CAJ17436.1"/>
    <property type="molecule type" value="mRNA"/>
</dbReference>
<dbReference type="SMR" id="Q4GX87"/>
<dbReference type="GO" id="GO:0022625">
    <property type="term" value="C:cytosolic large ribosomal subunit"/>
    <property type="evidence" value="ECO:0007669"/>
    <property type="project" value="TreeGrafter"/>
</dbReference>
<dbReference type="GO" id="GO:0003735">
    <property type="term" value="F:structural constituent of ribosome"/>
    <property type="evidence" value="ECO:0007669"/>
    <property type="project" value="InterPro"/>
</dbReference>
<dbReference type="GO" id="GO:0022618">
    <property type="term" value="P:protein-RNA complex assembly"/>
    <property type="evidence" value="ECO:0007669"/>
    <property type="project" value="TreeGrafter"/>
</dbReference>
<dbReference type="GO" id="GO:0006412">
    <property type="term" value="P:translation"/>
    <property type="evidence" value="ECO:0007669"/>
    <property type="project" value="InterPro"/>
</dbReference>
<dbReference type="FunFam" id="3.30.720.90:FF:000001">
    <property type="entry name" value="60S ribosomal protein L38"/>
    <property type="match status" value="1"/>
</dbReference>
<dbReference type="Gene3D" id="3.30.720.90">
    <property type="match status" value="1"/>
</dbReference>
<dbReference type="InterPro" id="IPR002675">
    <property type="entry name" value="Ribosomal_eL38"/>
</dbReference>
<dbReference type="InterPro" id="IPR038464">
    <property type="entry name" value="Ribosomal_eL38_sf"/>
</dbReference>
<dbReference type="PANTHER" id="PTHR10965">
    <property type="entry name" value="60S RIBOSOMAL PROTEIN L38"/>
    <property type="match status" value="1"/>
</dbReference>
<dbReference type="PANTHER" id="PTHR10965:SF0">
    <property type="entry name" value="LARGE RIBOSOMAL SUBUNIT PROTEIN EL38"/>
    <property type="match status" value="1"/>
</dbReference>
<dbReference type="Pfam" id="PF01781">
    <property type="entry name" value="Ribosomal_L38e"/>
    <property type="match status" value="1"/>
</dbReference>